<evidence type="ECO:0000255" key="1">
    <source>
        <dbReference type="HAMAP-Rule" id="MF_00154"/>
    </source>
</evidence>
<protein>
    <recommendedName>
        <fullName evidence="1">Protoheme IX farnesyltransferase 1</fullName>
        <ecNumber evidence="1">2.5.1.141</ecNumber>
    </recommendedName>
    <alternativeName>
        <fullName evidence="1">Heme B farnesyltransferase 1</fullName>
    </alternativeName>
    <alternativeName>
        <fullName evidence="1">Heme O synthase 1</fullName>
    </alternativeName>
</protein>
<feature type="chain" id="PRO_0000346003" description="Protoheme IX farnesyltransferase 1">
    <location>
        <begin position="1"/>
        <end position="297"/>
    </location>
</feature>
<feature type="transmembrane region" description="Helical" evidence="1">
    <location>
        <begin position="23"/>
        <end position="43"/>
    </location>
</feature>
<feature type="transmembrane region" description="Helical" evidence="1">
    <location>
        <begin position="45"/>
        <end position="65"/>
    </location>
</feature>
<feature type="transmembrane region" description="Helical" evidence="1">
    <location>
        <begin position="93"/>
        <end position="113"/>
    </location>
</feature>
<feature type="transmembrane region" description="Helical" evidence="1">
    <location>
        <begin position="117"/>
        <end position="137"/>
    </location>
</feature>
<feature type="transmembrane region" description="Helical" evidence="1">
    <location>
        <begin position="145"/>
        <end position="165"/>
    </location>
</feature>
<feature type="transmembrane region" description="Helical" evidence="1">
    <location>
        <begin position="171"/>
        <end position="191"/>
    </location>
</feature>
<feature type="transmembrane region" description="Helical" evidence="1">
    <location>
        <begin position="216"/>
        <end position="236"/>
    </location>
</feature>
<feature type="transmembrane region" description="Helical" evidence="1">
    <location>
        <begin position="241"/>
        <end position="261"/>
    </location>
</feature>
<feature type="transmembrane region" description="Helical" evidence="1">
    <location>
        <begin position="277"/>
        <end position="297"/>
    </location>
</feature>
<sequence length="297" mass="32558">MATLLSVRRARWRDYLELTKPKVVVLMLITSLAGMFLATRAGVSWSVLLFGNLGIGLCAGGAAVVNHVVDRRIDALMARTHKRPLAQGRVEPLPALLFALALALLGMVLLLVFTNALTAWLTLASLLGYAVLYTGFLKRATPQNIVIGGLAGAAPPLLGWVAVSGHVSAEPLLLVLIIFAWTPPHFWALAIHRKEEYAKADIPMLPVTHGERYTKLHILLYTLILLAVSLLPYAIHMSGPLYLACALGLGLRFLHWAWVLYRSSRPHAAIGTFKYSIGYLFALFIALLLDHYLLLSL</sequence>
<name>CYOE1_PSEP1</name>
<accession>A5VWP2</accession>
<proteinExistence type="inferred from homology"/>
<organism>
    <name type="scientific">Pseudomonas putida (strain ATCC 700007 / DSM 6899 / JCM 31910 / BCRC 17059 / LMG 24140 / F1)</name>
    <dbReference type="NCBI Taxonomy" id="351746"/>
    <lineage>
        <taxon>Bacteria</taxon>
        <taxon>Pseudomonadati</taxon>
        <taxon>Pseudomonadota</taxon>
        <taxon>Gammaproteobacteria</taxon>
        <taxon>Pseudomonadales</taxon>
        <taxon>Pseudomonadaceae</taxon>
        <taxon>Pseudomonas</taxon>
    </lineage>
</organism>
<comment type="function">
    <text evidence="1">Converts heme B (protoheme IX) to heme O by substitution of the vinyl group on carbon 2 of heme B porphyrin ring with a hydroxyethyl farnesyl side group.</text>
</comment>
<comment type="catalytic activity">
    <reaction evidence="1">
        <text>heme b + (2E,6E)-farnesyl diphosphate + H2O = Fe(II)-heme o + diphosphate</text>
        <dbReference type="Rhea" id="RHEA:28070"/>
        <dbReference type="ChEBI" id="CHEBI:15377"/>
        <dbReference type="ChEBI" id="CHEBI:33019"/>
        <dbReference type="ChEBI" id="CHEBI:60344"/>
        <dbReference type="ChEBI" id="CHEBI:60530"/>
        <dbReference type="ChEBI" id="CHEBI:175763"/>
        <dbReference type="EC" id="2.5.1.141"/>
    </reaction>
</comment>
<comment type="pathway">
    <text evidence="1">Porphyrin-containing compound metabolism; heme O biosynthesis; heme O from protoheme: step 1/1.</text>
</comment>
<comment type="subcellular location">
    <subcellularLocation>
        <location evidence="1">Cell inner membrane</location>
        <topology evidence="1">Multi-pass membrane protein</topology>
    </subcellularLocation>
</comment>
<comment type="miscellaneous">
    <text evidence="1">Carbon 2 of the heme B porphyrin ring is defined according to the Fischer nomenclature.</text>
</comment>
<comment type="similarity">
    <text evidence="1">Belongs to the UbiA prenyltransferase family. Protoheme IX farnesyltransferase subfamily.</text>
</comment>
<keyword id="KW-0997">Cell inner membrane</keyword>
<keyword id="KW-1003">Cell membrane</keyword>
<keyword id="KW-0350">Heme biosynthesis</keyword>
<keyword id="KW-0472">Membrane</keyword>
<keyword id="KW-0808">Transferase</keyword>
<keyword id="KW-0812">Transmembrane</keyword>
<keyword id="KW-1133">Transmembrane helix</keyword>
<dbReference type="EC" id="2.5.1.141" evidence="1"/>
<dbReference type="EMBL" id="CP000712">
    <property type="protein sequence ID" value="ABQ76302.1"/>
    <property type="molecule type" value="Genomic_DNA"/>
</dbReference>
<dbReference type="SMR" id="A5VWP2"/>
<dbReference type="KEGG" id="ppf:Pput_0127"/>
<dbReference type="eggNOG" id="COG0109">
    <property type="taxonomic scope" value="Bacteria"/>
</dbReference>
<dbReference type="HOGENOM" id="CLU_029631_0_2_6"/>
<dbReference type="UniPathway" id="UPA00834">
    <property type="reaction ID" value="UER00712"/>
</dbReference>
<dbReference type="GO" id="GO:0005886">
    <property type="term" value="C:plasma membrane"/>
    <property type="evidence" value="ECO:0007669"/>
    <property type="project" value="UniProtKB-SubCell"/>
</dbReference>
<dbReference type="GO" id="GO:0008495">
    <property type="term" value="F:protoheme IX farnesyltransferase activity"/>
    <property type="evidence" value="ECO:0007669"/>
    <property type="project" value="UniProtKB-UniRule"/>
</dbReference>
<dbReference type="GO" id="GO:0048034">
    <property type="term" value="P:heme O biosynthetic process"/>
    <property type="evidence" value="ECO:0007669"/>
    <property type="project" value="UniProtKB-UniRule"/>
</dbReference>
<dbReference type="CDD" id="cd13957">
    <property type="entry name" value="PT_UbiA_Cox10"/>
    <property type="match status" value="1"/>
</dbReference>
<dbReference type="FunFam" id="1.10.357.140:FF:000001">
    <property type="entry name" value="Protoheme IX farnesyltransferase"/>
    <property type="match status" value="1"/>
</dbReference>
<dbReference type="Gene3D" id="1.10.357.140">
    <property type="entry name" value="UbiA prenyltransferase"/>
    <property type="match status" value="1"/>
</dbReference>
<dbReference type="HAMAP" id="MF_00154">
    <property type="entry name" value="CyoE_CtaB"/>
    <property type="match status" value="1"/>
</dbReference>
<dbReference type="InterPro" id="IPR006369">
    <property type="entry name" value="Protohaem_IX_farnesylTrfase"/>
</dbReference>
<dbReference type="InterPro" id="IPR000537">
    <property type="entry name" value="UbiA_prenyltransferase"/>
</dbReference>
<dbReference type="InterPro" id="IPR030470">
    <property type="entry name" value="UbiA_prenylTrfase_CS"/>
</dbReference>
<dbReference type="InterPro" id="IPR044878">
    <property type="entry name" value="UbiA_sf"/>
</dbReference>
<dbReference type="NCBIfam" id="TIGR01473">
    <property type="entry name" value="cyoE_ctaB"/>
    <property type="match status" value="1"/>
</dbReference>
<dbReference type="NCBIfam" id="NF003349">
    <property type="entry name" value="PRK04375.1-2"/>
    <property type="match status" value="1"/>
</dbReference>
<dbReference type="PANTHER" id="PTHR43448:SF7">
    <property type="entry name" value="4-HYDROXYBENZOATE SOLANESYLTRANSFERASE"/>
    <property type="match status" value="1"/>
</dbReference>
<dbReference type="PANTHER" id="PTHR43448">
    <property type="entry name" value="PROTOHEME IX FARNESYLTRANSFERASE, MITOCHONDRIAL"/>
    <property type="match status" value="1"/>
</dbReference>
<dbReference type="Pfam" id="PF01040">
    <property type="entry name" value="UbiA"/>
    <property type="match status" value="1"/>
</dbReference>
<dbReference type="PROSITE" id="PS00943">
    <property type="entry name" value="UBIA"/>
    <property type="match status" value="1"/>
</dbReference>
<reference key="1">
    <citation type="submission" date="2007-05" db="EMBL/GenBank/DDBJ databases">
        <title>Complete sequence of Pseudomonas putida F1.</title>
        <authorList>
            <consortium name="US DOE Joint Genome Institute"/>
            <person name="Copeland A."/>
            <person name="Lucas S."/>
            <person name="Lapidus A."/>
            <person name="Barry K."/>
            <person name="Detter J.C."/>
            <person name="Glavina del Rio T."/>
            <person name="Hammon N."/>
            <person name="Israni S."/>
            <person name="Dalin E."/>
            <person name="Tice H."/>
            <person name="Pitluck S."/>
            <person name="Chain P."/>
            <person name="Malfatti S."/>
            <person name="Shin M."/>
            <person name="Vergez L."/>
            <person name="Schmutz J."/>
            <person name="Larimer F."/>
            <person name="Land M."/>
            <person name="Hauser L."/>
            <person name="Kyrpides N."/>
            <person name="Lykidis A."/>
            <person name="Parales R."/>
            <person name="Richardson P."/>
        </authorList>
    </citation>
    <scope>NUCLEOTIDE SEQUENCE [LARGE SCALE GENOMIC DNA]</scope>
    <source>
        <strain>ATCC 700007 / DSM 6899 / JCM 31910 / BCRC 17059 / LMG 24140 / F1</strain>
    </source>
</reference>
<gene>
    <name evidence="1" type="primary">cyoE1</name>
    <name type="ordered locus">Pput_0127</name>
</gene>